<proteinExistence type="inferred from homology"/>
<organism>
    <name type="scientific">Acidovorax ebreus (strain TPSY)</name>
    <name type="common">Diaphorobacter sp. (strain TPSY)</name>
    <dbReference type="NCBI Taxonomy" id="535289"/>
    <lineage>
        <taxon>Bacteria</taxon>
        <taxon>Pseudomonadati</taxon>
        <taxon>Pseudomonadota</taxon>
        <taxon>Betaproteobacteria</taxon>
        <taxon>Burkholderiales</taxon>
        <taxon>Comamonadaceae</taxon>
        <taxon>Diaphorobacter</taxon>
    </lineage>
</organism>
<evidence type="ECO:0000255" key="1">
    <source>
        <dbReference type="HAMAP-Rule" id="MF_00083"/>
    </source>
</evidence>
<evidence type="ECO:0000256" key="2">
    <source>
        <dbReference type="SAM" id="MobiDB-lite"/>
    </source>
</evidence>
<comment type="function">
    <text evidence="1">Hydrolyzes ribosome-free peptidyl-tRNAs (with 1 or more amino acids incorporated), which drop off the ribosome during protein synthesis, or as a result of ribosome stalling.</text>
</comment>
<comment type="function">
    <text evidence="1">Catalyzes the release of premature peptidyl moieties from peptidyl-tRNA molecules trapped in stalled 50S ribosomal subunits, and thus maintains levels of free tRNAs and 50S ribosomes.</text>
</comment>
<comment type="catalytic activity">
    <reaction evidence="1">
        <text>an N-acyl-L-alpha-aminoacyl-tRNA + H2O = an N-acyl-L-amino acid + a tRNA + H(+)</text>
        <dbReference type="Rhea" id="RHEA:54448"/>
        <dbReference type="Rhea" id="RHEA-COMP:10123"/>
        <dbReference type="Rhea" id="RHEA-COMP:13883"/>
        <dbReference type="ChEBI" id="CHEBI:15377"/>
        <dbReference type="ChEBI" id="CHEBI:15378"/>
        <dbReference type="ChEBI" id="CHEBI:59874"/>
        <dbReference type="ChEBI" id="CHEBI:78442"/>
        <dbReference type="ChEBI" id="CHEBI:138191"/>
        <dbReference type="EC" id="3.1.1.29"/>
    </reaction>
</comment>
<comment type="subunit">
    <text evidence="1">Monomer.</text>
</comment>
<comment type="subcellular location">
    <subcellularLocation>
        <location evidence="1">Cytoplasm</location>
    </subcellularLocation>
</comment>
<comment type="similarity">
    <text evidence="1">Belongs to the PTH family.</text>
</comment>
<reference key="1">
    <citation type="submission" date="2009-01" db="EMBL/GenBank/DDBJ databases">
        <title>Complete sequence of Diaphorobacter sp. TPSY.</title>
        <authorList>
            <consortium name="US DOE Joint Genome Institute"/>
            <person name="Lucas S."/>
            <person name="Copeland A."/>
            <person name="Lapidus A."/>
            <person name="Glavina del Rio T."/>
            <person name="Tice H."/>
            <person name="Bruce D."/>
            <person name="Goodwin L."/>
            <person name="Pitluck S."/>
            <person name="Chertkov O."/>
            <person name="Brettin T."/>
            <person name="Detter J.C."/>
            <person name="Han C."/>
            <person name="Larimer F."/>
            <person name="Land M."/>
            <person name="Hauser L."/>
            <person name="Kyrpides N."/>
            <person name="Mikhailova N."/>
            <person name="Coates J.D."/>
        </authorList>
    </citation>
    <scope>NUCLEOTIDE SEQUENCE [LARGE SCALE GENOMIC DNA]</scope>
    <source>
        <strain>TPSY</strain>
    </source>
</reference>
<feature type="chain" id="PRO_1000118388" description="Peptidyl-tRNA hydrolase">
    <location>
        <begin position="1"/>
        <end position="211"/>
    </location>
</feature>
<feature type="region of interest" description="Disordered" evidence="2">
    <location>
        <begin position="189"/>
        <end position="211"/>
    </location>
</feature>
<feature type="compositionally biased region" description="Low complexity" evidence="2">
    <location>
        <begin position="197"/>
        <end position="211"/>
    </location>
</feature>
<feature type="active site" description="Proton acceptor" evidence="1">
    <location>
        <position position="20"/>
    </location>
</feature>
<feature type="binding site" evidence="1">
    <location>
        <position position="15"/>
    </location>
    <ligand>
        <name>tRNA</name>
        <dbReference type="ChEBI" id="CHEBI:17843"/>
    </ligand>
</feature>
<feature type="binding site" evidence="1">
    <location>
        <position position="66"/>
    </location>
    <ligand>
        <name>tRNA</name>
        <dbReference type="ChEBI" id="CHEBI:17843"/>
    </ligand>
</feature>
<feature type="binding site" evidence="1">
    <location>
        <position position="68"/>
    </location>
    <ligand>
        <name>tRNA</name>
        <dbReference type="ChEBI" id="CHEBI:17843"/>
    </ligand>
</feature>
<feature type="binding site" evidence="1">
    <location>
        <position position="114"/>
    </location>
    <ligand>
        <name>tRNA</name>
        <dbReference type="ChEBI" id="CHEBI:17843"/>
    </ligand>
</feature>
<feature type="site" description="Discriminates between blocked and unblocked aminoacyl-tRNA" evidence="1">
    <location>
        <position position="10"/>
    </location>
</feature>
<feature type="site" description="Stabilizes the basic form of H active site to accept a proton" evidence="1">
    <location>
        <position position="93"/>
    </location>
</feature>
<name>PTH_ACIET</name>
<sequence length="211" mass="22978">MIKLFVGLGNPGPEYEATRHNAGFWWIDALARELKVTLVPERSYHGLVARASVAGHSVWLLQPQTFMNLSGKSVAALARFFKIPPEEILVAHDELDIPPGQAKLKRGGSHAGHNGLRDIHAQLGTSDYWRLRIGIGHPGVKAEVVNWVLKKPAPDQRTLIEDSILHSLKAYPALLAGDMDKATLLVHTTKPPRPKATRPAQAQAAPQAGAD</sequence>
<protein>
    <recommendedName>
        <fullName evidence="1">Peptidyl-tRNA hydrolase</fullName>
        <shortName evidence="1">Pth</shortName>
        <ecNumber evidence="1">3.1.1.29</ecNumber>
    </recommendedName>
</protein>
<dbReference type="EC" id="3.1.1.29" evidence="1"/>
<dbReference type="EMBL" id="CP001392">
    <property type="protein sequence ID" value="ACM32300.1"/>
    <property type="molecule type" value="Genomic_DNA"/>
</dbReference>
<dbReference type="RefSeq" id="WP_012655794.1">
    <property type="nucleotide sequence ID" value="NC_011992.1"/>
</dbReference>
<dbReference type="SMR" id="B9ME46"/>
<dbReference type="KEGG" id="dia:Dtpsy_0822"/>
<dbReference type="eggNOG" id="COG0193">
    <property type="taxonomic scope" value="Bacteria"/>
</dbReference>
<dbReference type="HOGENOM" id="CLU_062456_3_1_4"/>
<dbReference type="Proteomes" id="UP000000450">
    <property type="component" value="Chromosome"/>
</dbReference>
<dbReference type="GO" id="GO:0005737">
    <property type="term" value="C:cytoplasm"/>
    <property type="evidence" value="ECO:0007669"/>
    <property type="project" value="UniProtKB-SubCell"/>
</dbReference>
<dbReference type="GO" id="GO:0004045">
    <property type="term" value="F:peptidyl-tRNA hydrolase activity"/>
    <property type="evidence" value="ECO:0007669"/>
    <property type="project" value="UniProtKB-UniRule"/>
</dbReference>
<dbReference type="GO" id="GO:0000049">
    <property type="term" value="F:tRNA binding"/>
    <property type="evidence" value="ECO:0007669"/>
    <property type="project" value="UniProtKB-UniRule"/>
</dbReference>
<dbReference type="GO" id="GO:0006515">
    <property type="term" value="P:protein quality control for misfolded or incompletely synthesized proteins"/>
    <property type="evidence" value="ECO:0007669"/>
    <property type="project" value="UniProtKB-UniRule"/>
</dbReference>
<dbReference type="GO" id="GO:0072344">
    <property type="term" value="P:rescue of stalled ribosome"/>
    <property type="evidence" value="ECO:0007669"/>
    <property type="project" value="UniProtKB-UniRule"/>
</dbReference>
<dbReference type="CDD" id="cd00462">
    <property type="entry name" value="PTH"/>
    <property type="match status" value="1"/>
</dbReference>
<dbReference type="FunFam" id="3.40.50.1470:FF:000001">
    <property type="entry name" value="Peptidyl-tRNA hydrolase"/>
    <property type="match status" value="1"/>
</dbReference>
<dbReference type="Gene3D" id="3.40.50.1470">
    <property type="entry name" value="Peptidyl-tRNA hydrolase"/>
    <property type="match status" value="1"/>
</dbReference>
<dbReference type="HAMAP" id="MF_00083">
    <property type="entry name" value="Pept_tRNA_hydro_bact"/>
    <property type="match status" value="1"/>
</dbReference>
<dbReference type="InterPro" id="IPR001328">
    <property type="entry name" value="Pept_tRNA_hydro"/>
</dbReference>
<dbReference type="InterPro" id="IPR018171">
    <property type="entry name" value="Pept_tRNA_hydro_CS"/>
</dbReference>
<dbReference type="InterPro" id="IPR036416">
    <property type="entry name" value="Pept_tRNA_hydro_sf"/>
</dbReference>
<dbReference type="NCBIfam" id="TIGR00447">
    <property type="entry name" value="pth"/>
    <property type="match status" value="1"/>
</dbReference>
<dbReference type="PANTHER" id="PTHR17224">
    <property type="entry name" value="PEPTIDYL-TRNA HYDROLASE"/>
    <property type="match status" value="1"/>
</dbReference>
<dbReference type="PANTHER" id="PTHR17224:SF1">
    <property type="entry name" value="PEPTIDYL-TRNA HYDROLASE"/>
    <property type="match status" value="1"/>
</dbReference>
<dbReference type="Pfam" id="PF01195">
    <property type="entry name" value="Pept_tRNA_hydro"/>
    <property type="match status" value="1"/>
</dbReference>
<dbReference type="SUPFAM" id="SSF53178">
    <property type="entry name" value="Peptidyl-tRNA hydrolase-like"/>
    <property type="match status" value="1"/>
</dbReference>
<dbReference type="PROSITE" id="PS01196">
    <property type="entry name" value="PEPT_TRNA_HYDROL_2"/>
    <property type="match status" value="1"/>
</dbReference>
<accession>B9ME46</accession>
<keyword id="KW-0963">Cytoplasm</keyword>
<keyword id="KW-0378">Hydrolase</keyword>
<keyword id="KW-1185">Reference proteome</keyword>
<keyword id="KW-0694">RNA-binding</keyword>
<keyword id="KW-0820">tRNA-binding</keyword>
<gene>
    <name evidence="1" type="primary">pth</name>
    <name type="ordered locus">Dtpsy_0822</name>
</gene>